<accession>B6IVY6</accession>
<dbReference type="EC" id="5.3.1.24" evidence="1"/>
<dbReference type="EMBL" id="CP000613">
    <property type="protein sequence ID" value="ACJ00460.1"/>
    <property type="molecule type" value="Genomic_DNA"/>
</dbReference>
<dbReference type="RefSeq" id="WP_012568239.1">
    <property type="nucleotide sequence ID" value="NC_011420.2"/>
</dbReference>
<dbReference type="SMR" id="B6IVY6"/>
<dbReference type="STRING" id="414684.RC1_3095"/>
<dbReference type="KEGG" id="rce:RC1_3095"/>
<dbReference type="eggNOG" id="COG0135">
    <property type="taxonomic scope" value="Bacteria"/>
</dbReference>
<dbReference type="HOGENOM" id="CLU_076364_1_1_5"/>
<dbReference type="OrthoDB" id="9796196at2"/>
<dbReference type="UniPathway" id="UPA00035">
    <property type="reaction ID" value="UER00042"/>
</dbReference>
<dbReference type="Proteomes" id="UP000001591">
    <property type="component" value="Chromosome"/>
</dbReference>
<dbReference type="GO" id="GO:0004640">
    <property type="term" value="F:phosphoribosylanthranilate isomerase activity"/>
    <property type="evidence" value="ECO:0007669"/>
    <property type="project" value="UniProtKB-UniRule"/>
</dbReference>
<dbReference type="GO" id="GO:0000162">
    <property type="term" value="P:L-tryptophan biosynthetic process"/>
    <property type="evidence" value="ECO:0007669"/>
    <property type="project" value="UniProtKB-UniRule"/>
</dbReference>
<dbReference type="CDD" id="cd00405">
    <property type="entry name" value="PRAI"/>
    <property type="match status" value="1"/>
</dbReference>
<dbReference type="Gene3D" id="3.20.20.70">
    <property type="entry name" value="Aldolase class I"/>
    <property type="match status" value="1"/>
</dbReference>
<dbReference type="HAMAP" id="MF_00135">
    <property type="entry name" value="PRAI"/>
    <property type="match status" value="1"/>
</dbReference>
<dbReference type="InterPro" id="IPR013785">
    <property type="entry name" value="Aldolase_TIM"/>
</dbReference>
<dbReference type="InterPro" id="IPR001240">
    <property type="entry name" value="PRAI_dom"/>
</dbReference>
<dbReference type="InterPro" id="IPR011060">
    <property type="entry name" value="RibuloseP-bd_barrel"/>
</dbReference>
<dbReference type="InterPro" id="IPR044643">
    <property type="entry name" value="TrpF_fam"/>
</dbReference>
<dbReference type="NCBIfam" id="NF002295">
    <property type="entry name" value="PRK01222.1-1"/>
    <property type="match status" value="1"/>
</dbReference>
<dbReference type="PANTHER" id="PTHR42894">
    <property type="entry name" value="N-(5'-PHOSPHORIBOSYL)ANTHRANILATE ISOMERASE"/>
    <property type="match status" value="1"/>
</dbReference>
<dbReference type="PANTHER" id="PTHR42894:SF1">
    <property type="entry name" value="N-(5'-PHOSPHORIBOSYL)ANTHRANILATE ISOMERASE"/>
    <property type="match status" value="1"/>
</dbReference>
<dbReference type="Pfam" id="PF00697">
    <property type="entry name" value="PRAI"/>
    <property type="match status" value="1"/>
</dbReference>
<dbReference type="SUPFAM" id="SSF51366">
    <property type="entry name" value="Ribulose-phoshate binding barrel"/>
    <property type="match status" value="1"/>
</dbReference>
<reference key="1">
    <citation type="submission" date="2007-03" db="EMBL/GenBank/DDBJ databases">
        <title>Genome sequence of Rhodospirillum centenum.</title>
        <authorList>
            <person name="Touchman J.W."/>
            <person name="Bauer C."/>
            <person name="Blankenship R.E."/>
        </authorList>
    </citation>
    <scope>NUCLEOTIDE SEQUENCE [LARGE SCALE GENOMIC DNA]</scope>
    <source>
        <strain>ATCC 51521 / SW</strain>
    </source>
</reference>
<gene>
    <name evidence="1" type="primary">trpF</name>
    <name type="ordered locus">RC1_3095</name>
</gene>
<feature type="chain" id="PRO_1000095936" description="N-(5'-phosphoribosyl)anthranilate isomerase">
    <location>
        <begin position="1"/>
        <end position="214"/>
    </location>
</feature>
<name>TRPF_RHOCS</name>
<evidence type="ECO:0000255" key="1">
    <source>
        <dbReference type="HAMAP-Rule" id="MF_00135"/>
    </source>
</evidence>
<organism>
    <name type="scientific">Rhodospirillum centenum (strain ATCC 51521 / SW)</name>
    <dbReference type="NCBI Taxonomy" id="414684"/>
    <lineage>
        <taxon>Bacteria</taxon>
        <taxon>Pseudomonadati</taxon>
        <taxon>Pseudomonadota</taxon>
        <taxon>Alphaproteobacteria</taxon>
        <taxon>Rhodospirillales</taxon>
        <taxon>Rhodospirillaceae</taxon>
        <taxon>Rhodospirillum</taxon>
    </lineage>
</organism>
<proteinExistence type="inferred from homology"/>
<comment type="catalytic activity">
    <reaction evidence="1">
        <text>N-(5-phospho-beta-D-ribosyl)anthranilate = 1-(2-carboxyphenylamino)-1-deoxy-D-ribulose 5-phosphate</text>
        <dbReference type="Rhea" id="RHEA:21540"/>
        <dbReference type="ChEBI" id="CHEBI:18277"/>
        <dbReference type="ChEBI" id="CHEBI:58613"/>
        <dbReference type="EC" id="5.3.1.24"/>
    </reaction>
</comment>
<comment type="pathway">
    <text evidence="1">Amino-acid biosynthesis; L-tryptophan biosynthesis; L-tryptophan from chorismate: step 3/5.</text>
</comment>
<comment type="similarity">
    <text evidence="1">Belongs to the TrpF family.</text>
</comment>
<sequence>MPVQVKICGINRPDALAAAVAGGARYVGLVFYERSPRHVAPELAAELARQVPTGVRVVGLFVDPDALMLERVLGSVPLDLIQLHGEETPERVAAVRAAHGIEVMKAVKVAGAADLDRAAAYEGACDRLLFDAKAPKGVAALPGGNGLSFDWTLLAGRTWARPWMLSGGLNAGNLAEAVRATGATAVDVSSGVEDRPGHKDPALVAGFLACAAAL</sequence>
<keyword id="KW-0028">Amino-acid biosynthesis</keyword>
<keyword id="KW-0057">Aromatic amino acid biosynthesis</keyword>
<keyword id="KW-0413">Isomerase</keyword>
<keyword id="KW-1185">Reference proteome</keyword>
<keyword id="KW-0822">Tryptophan biosynthesis</keyword>
<protein>
    <recommendedName>
        <fullName evidence="1">N-(5'-phosphoribosyl)anthranilate isomerase</fullName>
        <shortName evidence="1">PRAI</shortName>
        <ecNumber evidence="1">5.3.1.24</ecNumber>
    </recommendedName>
</protein>